<protein>
    <recommendedName>
        <fullName>Translationally-controlled tumor protein homolog</fullName>
        <shortName>TCTP</shortName>
    </recommendedName>
    <alternativeName>
        <fullName>HTP</fullName>
    </alternativeName>
</protein>
<sequence length="168" mass="18884">MLVYQDKLSGDELLSDSFPYRELENGVLWEVDGHWVVQGAVDVDIGANPSAEGGGEDEGVDDQAVKVVDIVDTFRLQEQPAFDKKQFIAYIKRYIKNLTAKLEGEELDAFKKNVESATKYLLSKLKDLQFFVGESMHDDGSVVFAYYREGAADPTFLYFAHGLKEVKC</sequence>
<proteinExistence type="evidence at transcript level"/>
<gene>
    <name type="primary">TCTP</name>
</gene>
<accession>Q9M5G3</accession>
<organism>
    <name type="scientific">Hordeum vulgare</name>
    <name type="common">Barley</name>
    <dbReference type="NCBI Taxonomy" id="4513"/>
    <lineage>
        <taxon>Eukaryota</taxon>
        <taxon>Viridiplantae</taxon>
        <taxon>Streptophyta</taxon>
        <taxon>Embryophyta</taxon>
        <taxon>Tracheophyta</taxon>
        <taxon>Spermatophyta</taxon>
        <taxon>Magnoliopsida</taxon>
        <taxon>Liliopsida</taxon>
        <taxon>Poales</taxon>
        <taxon>Poaceae</taxon>
        <taxon>BOP clade</taxon>
        <taxon>Pooideae</taxon>
        <taxon>Triticodae</taxon>
        <taxon>Triticeae</taxon>
        <taxon>Hordeinae</taxon>
        <taxon>Hordeum</taxon>
    </lineage>
</organism>
<dbReference type="EMBL" id="AF230786">
    <property type="protein sequence ID" value="AAF61933.1"/>
    <property type="status" value="ALT_FRAME"/>
    <property type="molecule type" value="mRNA"/>
</dbReference>
<dbReference type="SMR" id="Q9M5G3"/>
<dbReference type="OMA" id="PYATVWA"/>
<dbReference type="ExpressionAtlas" id="Q9M5G3">
    <property type="expression patterns" value="baseline and differential"/>
</dbReference>
<dbReference type="GO" id="GO:0005737">
    <property type="term" value="C:cytoplasm"/>
    <property type="evidence" value="ECO:0007669"/>
    <property type="project" value="UniProtKB-SubCell"/>
</dbReference>
<dbReference type="GO" id="GO:0005509">
    <property type="term" value="F:calcium ion binding"/>
    <property type="evidence" value="ECO:0007669"/>
    <property type="project" value="TreeGrafter"/>
</dbReference>
<dbReference type="FunFam" id="2.170.150.10:FF:000003">
    <property type="entry name" value="Translationally-controlled tumor protein homolog"/>
    <property type="match status" value="1"/>
</dbReference>
<dbReference type="Gene3D" id="2.170.150.10">
    <property type="entry name" value="Metal Binding Protein, Guanine Nucleotide Exchange Factor, Chain A"/>
    <property type="match status" value="1"/>
</dbReference>
<dbReference type="InterPro" id="IPR011057">
    <property type="entry name" value="Mss4-like_sf"/>
</dbReference>
<dbReference type="InterPro" id="IPR011323">
    <property type="entry name" value="Mss4/transl-control_tumour"/>
</dbReference>
<dbReference type="InterPro" id="IPR034737">
    <property type="entry name" value="TCTP"/>
</dbReference>
<dbReference type="InterPro" id="IPR018103">
    <property type="entry name" value="Translation_control_tumour_CS"/>
</dbReference>
<dbReference type="InterPro" id="IPR018105">
    <property type="entry name" value="Translational_control_tumour_p"/>
</dbReference>
<dbReference type="PANTHER" id="PTHR11991">
    <property type="entry name" value="TRANSLATIONALLY CONTROLLED TUMOR PROTEIN-RELATED"/>
    <property type="match status" value="1"/>
</dbReference>
<dbReference type="PANTHER" id="PTHR11991:SF0">
    <property type="entry name" value="TRANSLATIONALLY-CONTROLLED TUMOR PROTEIN"/>
    <property type="match status" value="1"/>
</dbReference>
<dbReference type="Pfam" id="PF00838">
    <property type="entry name" value="TCTP"/>
    <property type="match status" value="1"/>
</dbReference>
<dbReference type="PRINTS" id="PR01653">
    <property type="entry name" value="TCTPROTEIN"/>
</dbReference>
<dbReference type="SUPFAM" id="SSF51316">
    <property type="entry name" value="Mss4-like"/>
    <property type="match status" value="1"/>
</dbReference>
<dbReference type="PROSITE" id="PS01002">
    <property type="entry name" value="TCTP_1"/>
    <property type="match status" value="1"/>
</dbReference>
<dbReference type="PROSITE" id="PS01003">
    <property type="entry name" value="TCTP_2"/>
    <property type="match status" value="1"/>
</dbReference>
<dbReference type="PROSITE" id="PS51797">
    <property type="entry name" value="TCTP_3"/>
    <property type="match status" value="1"/>
</dbReference>
<comment type="function">
    <text evidence="1">Involved in calcium binding and microtubule stabilization.</text>
</comment>
<comment type="subcellular location">
    <subcellularLocation>
        <location evidence="1">Cytoplasm</location>
    </subcellularLocation>
</comment>
<comment type="similarity">
    <text evidence="2">Belongs to the TCTP family.</text>
</comment>
<comment type="sequence caution" evidence="3">
    <conflict type="frameshift">
        <sequence resource="EMBL-CDS" id="AAF61933"/>
    </conflict>
</comment>
<keyword id="KW-0106">Calcium</keyword>
<keyword id="KW-0963">Cytoplasm</keyword>
<feature type="chain" id="PRO_0000211302" description="Translationally-controlled tumor protein homolog">
    <location>
        <begin position="1"/>
        <end position="168"/>
    </location>
</feature>
<feature type="domain" description="TCTP" evidence="2">
    <location>
        <begin position="1"/>
        <end position="168"/>
    </location>
</feature>
<reference key="1">
    <citation type="submission" date="2000-02" db="EMBL/GenBank/DDBJ databases">
        <title>A translationally controlled human tumor protein cDNA clone analog induced by an avirulent greenbug biotype only in resistant isolines of barley.</title>
        <authorList>
            <person name="Hays D.B."/>
            <person name="Porter D.R."/>
            <person name="Skinner D.Z."/>
            <person name="Chenualt K.D."/>
            <person name="Guenzi A.C."/>
        </authorList>
    </citation>
    <scope>NUCLEOTIDE SEQUENCE [MRNA]</scope>
</reference>
<evidence type="ECO:0000250" key="1"/>
<evidence type="ECO:0000255" key="2">
    <source>
        <dbReference type="PROSITE-ProRule" id="PRU01133"/>
    </source>
</evidence>
<evidence type="ECO:0000305" key="3"/>
<name>TCTP_HORVU</name>